<accession>P31994</accession>
<accession>A6H8N3</accession>
<accession>O95649</accession>
<accession>Q53X85</accession>
<accession>Q5VXA9</accession>
<accession>Q8NIA1</accession>
<proteinExistence type="evidence at protein level"/>
<reference key="1">
    <citation type="submission" date="1997-01" db="EMBL/GenBank/DDBJ databases">
        <title>Fc-gamma-RIIb nucleotide sequences in SLE and non-SLE humans in vivo derived lymphocytes.</title>
        <authorList>
            <person name="Ng S."/>
            <person name="Sinclair N.R.S."/>
            <person name="Anderson C."/>
            <person name="Bell D.A."/>
            <person name="Cairns E."/>
        </authorList>
    </citation>
    <scope>NUCLEOTIDE SEQUENCE [MRNA] (ISOFORMS IIB1; IIB2; 4 AND 5)</scope>
    <scope>VARIANT THR-232</scope>
    <source>
        <tissue>Lymphocyte</tissue>
    </source>
</reference>
<reference key="2">
    <citation type="journal article" date="1989" name="EMBO J.">
        <title>Human IgG Fc receptor (hFcRII; CD32) exists as multiple isoforms in macrophages, lymphocytes and IgG-transporting placental epithelium.</title>
        <authorList>
            <person name="Stuart S.G."/>
            <person name="Simister N.E."/>
            <person name="Clarkson S.B."/>
            <person name="Kacinski B.M."/>
            <person name="Shapiro M."/>
            <person name="Mellman I."/>
        </authorList>
    </citation>
    <scope>NUCLEOTIDE SEQUENCE [MRNA] (ISOFORM IIB2)</scope>
    <source>
        <tissue>Placenta</tissue>
    </source>
</reference>
<reference key="3">
    <citation type="journal article" date="1989" name="J. Exp. Med.">
        <title>Structure and expression of human IgG FcRII(CD32). Functional heterogeneity is encoded by the alternatively spliced products of multiple genes.</title>
        <authorList>
            <person name="Brooks D.G."/>
            <person name="Qiu W.Q."/>
            <person name="Luster A.D."/>
            <person name="Ravetch J.V."/>
        </authorList>
    </citation>
    <scope>NUCLEOTIDE SEQUENCE [MRNA] (ISOFORMS IIB1; IIB2 AND IIB3)</scope>
    <scope>VARIANT PHE-205</scope>
</reference>
<reference key="4">
    <citation type="journal article" date="1990" name="Eur. J. Immunol.">
        <title>Distribution, inducibility and biological function of the cloned and expressed human beta Fc receptor II.</title>
        <authorList>
            <person name="Engelhardt W."/>
            <person name="Geerds C."/>
            <person name="Frey J."/>
        </authorList>
    </citation>
    <scope>NUCLEOTIDE SEQUENCE [MRNA] (ISOFORM IIB2)</scope>
    <source>
        <tissue>Placenta</tissue>
    </source>
</reference>
<reference key="5">
    <citation type="submission" date="2004-05" db="EMBL/GenBank/DDBJ databases">
        <title>Cloning of human full open reading frames in Gateway(TM) system entry vector (pDONR201).</title>
        <authorList>
            <person name="Ebert L."/>
            <person name="Schick M."/>
            <person name="Neubert P."/>
            <person name="Schatten R."/>
            <person name="Henze S."/>
            <person name="Korn B."/>
        </authorList>
    </citation>
    <scope>NUCLEOTIDE SEQUENCE [LARGE SCALE MRNA] (ISOFORM IIB2)</scope>
</reference>
<reference key="6">
    <citation type="journal article" date="2006" name="Nature">
        <title>The DNA sequence and biological annotation of human chromosome 1.</title>
        <authorList>
            <person name="Gregory S.G."/>
            <person name="Barlow K.F."/>
            <person name="McLay K.E."/>
            <person name="Kaul R."/>
            <person name="Swarbreck D."/>
            <person name="Dunham A."/>
            <person name="Scott C.E."/>
            <person name="Howe K.L."/>
            <person name="Woodfine K."/>
            <person name="Spencer C.C.A."/>
            <person name="Jones M.C."/>
            <person name="Gillson C."/>
            <person name="Searle S."/>
            <person name="Zhou Y."/>
            <person name="Kokocinski F."/>
            <person name="McDonald L."/>
            <person name="Evans R."/>
            <person name="Phillips K."/>
            <person name="Atkinson A."/>
            <person name="Cooper R."/>
            <person name="Jones C."/>
            <person name="Hall R.E."/>
            <person name="Andrews T.D."/>
            <person name="Lloyd C."/>
            <person name="Ainscough R."/>
            <person name="Almeida J.P."/>
            <person name="Ambrose K.D."/>
            <person name="Anderson F."/>
            <person name="Andrew R.W."/>
            <person name="Ashwell R.I.S."/>
            <person name="Aubin K."/>
            <person name="Babbage A.K."/>
            <person name="Bagguley C.L."/>
            <person name="Bailey J."/>
            <person name="Beasley H."/>
            <person name="Bethel G."/>
            <person name="Bird C.P."/>
            <person name="Bray-Allen S."/>
            <person name="Brown J.Y."/>
            <person name="Brown A.J."/>
            <person name="Buckley D."/>
            <person name="Burton J."/>
            <person name="Bye J."/>
            <person name="Carder C."/>
            <person name="Chapman J.C."/>
            <person name="Clark S.Y."/>
            <person name="Clarke G."/>
            <person name="Clee C."/>
            <person name="Cobley V."/>
            <person name="Collier R.E."/>
            <person name="Corby N."/>
            <person name="Coville G.J."/>
            <person name="Davies J."/>
            <person name="Deadman R."/>
            <person name="Dunn M."/>
            <person name="Earthrowl M."/>
            <person name="Ellington A.G."/>
            <person name="Errington H."/>
            <person name="Frankish A."/>
            <person name="Frankland J."/>
            <person name="French L."/>
            <person name="Garner P."/>
            <person name="Garnett J."/>
            <person name="Gay L."/>
            <person name="Ghori M.R.J."/>
            <person name="Gibson R."/>
            <person name="Gilby L.M."/>
            <person name="Gillett W."/>
            <person name="Glithero R.J."/>
            <person name="Grafham D.V."/>
            <person name="Griffiths C."/>
            <person name="Griffiths-Jones S."/>
            <person name="Grocock R."/>
            <person name="Hammond S."/>
            <person name="Harrison E.S.I."/>
            <person name="Hart E."/>
            <person name="Haugen E."/>
            <person name="Heath P.D."/>
            <person name="Holmes S."/>
            <person name="Holt K."/>
            <person name="Howden P.J."/>
            <person name="Hunt A.R."/>
            <person name="Hunt S.E."/>
            <person name="Hunter G."/>
            <person name="Isherwood J."/>
            <person name="James R."/>
            <person name="Johnson C."/>
            <person name="Johnson D."/>
            <person name="Joy A."/>
            <person name="Kay M."/>
            <person name="Kershaw J.K."/>
            <person name="Kibukawa M."/>
            <person name="Kimberley A.M."/>
            <person name="King A."/>
            <person name="Knights A.J."/>
            <person name="Lad H."/>
            <person name="Laird G."/>
            <person name="Lawlor S."/>
            <person name="Leongamornlert D.A."/>
            <person name="Lloyd D.M."/>
            <person name="Loveland J."/>
            <person name="Lovell J."/>
            <person name="Lush M.J."/>
            <person name="Lyne R."/>
            <person name="Martin S."/>
            <person name="Mashreghi-Mohammadi M."/>
            <person name="Matthews L."/>
            <person name="Matthews N.S.W."/>
            <person name="McLaren S."/>
            <person name="Milne S."/>
            <person name="Mistry S."/>
            <person name="Moore M.J.F."/>
            <person name="Nickerson T."/>
            <person name="O'Dell C.N."/>
            <person name="Oliver K."/>
            <person name="Palmeiri A."/>
            <person name="Palmer S.A."/>
            <person name="Parker A."/>
            <person name="Patel D."/>
            <person name="Pearce A.V."/>
            <person name="Peck A.I."/>
            <person name="Pelan S."/>
            <person name="Phelps K."/>
            <person name="Phillimore B.J."/>
            <person name="Plumb R."/>
            <person name="Rajan J."/>
            <person name="Raymond C."/>
            <person name="Rouse G."/>
            <person name="Saenphimmachak C."/>
            <person name="Sehra H.K."/>
            <person name="Sheridan E."/>
            <person name="Shownkeen R."/>
            <person name="Sims S."/>
            <person name="Skuce C.D."/>
            <person name="Smith M."/>
            <person name="Steward C."/>
            <person name="Subramanian S."/>
            <person name="Sycamore N."/>
            <person name="Tracey A."/>
            <person name="Tromans A."/>
            <person name="Van Helmond Z."/>
            <person name="Wall M."/>
            <person name="Wallis J.M."/>
            <person name="White S."/>
            <person name="Whitehead S.L."/>
            <person name="Wilkinson J.E."/>
            <person name="Willey D.L."/>
            <person name="Williams H."/>
            <person name="Wilming L."/>
            <person name="Wray P.W."/>
            <person name="Wu Z."/>
            <person name="Coulson A."/>
            <person name="Vaudin M."/>
            <person name="Sulston J.E."/>
            <person name="Durbin R.M."/>
            <person name="Hubbard T."/>
            <person name="Wooster R."/>
            <person name="Dunham I."/>
            <person name="Carter N.P."/>
            <person name="McVean G."/>
            <person name="Ross M.T."/>
            <person name="Harrow J."/>
            <person name="Olson M.V."/>
            <person name="Beck S."/>
            <person name="Rogers J."/>
            <person name="Bentley D.R."/>
        </authorList>
    </citation>
    <scope>NUCLEOTIDE SEQUENCE [LARGE SCALE GENOMIC DNA]</scope>
</reference>
<reference key="7">
    <citation type="journal article" date="2004" name="Genome Res.">
        <title>The status, quality, and expansion of the NIH full-length cDNA project: the Mammalian Gene Collection (MGC).</title>
        <authorList>
            <consortium name="The MGC Project Team"/>
        </authorList>
    </citation>
    <scope>NUCLEOTIDE SEQUENCE [LARGE SCALE MRNA] (ISOFORMS IIB1 AND IIB2)</scope>
    <source>
        <tissue>Skin</tissue>
    </source>
</reference>
<reference key="8">
    <citation type="journal article" date="2002" name="Arthritis Rheum.">
        <title>Fc gamma receptor gene polymorphisms in Japanese patients with systemic lupus erythematosus: contribution of FCGR2B to genetic susceptibility.</title>
        <authorList>
            <person name="Kyogoku C."/>
            <person name="Dijstelbloem H.M."/>
            <person name="Tsuchiya N."/>
            <person name="Hatta Y."/>
            <person name="Kato H."/>
            <person name="Yamaguchi A."/>
            <person name="Fukazawa T."/>
            <person name="Jansen M.D."/>
            <person name="Hashimoto H."/>
            <person name="van de Winkel J.G.J."/>
            <person name="Kallenberg C.G.M."/>
            <person name="Tokunaga K."/>
        </authorList>
    </citation>
    <scope>NUCLEOTIDE SEQUENCE [MRNA] OF 132-253</scope>
    <scope>INVOLVEMENT IN SLE</scope>
    <scope>VARIANT THR-232</scope>
</reference>
<reference key="9">
    <citation type="journal article" date="1993" name="Proc. Natl. Acad. Sci. U.S.A.">
        <title>Association of immunoglobulin G Fc receptor II with Src-like protein-tyrosine kinase Fgr in neutrophils.</title>
        <authorList>
            <person name="Hamada F."/>
            <person name="Aoki M."/>
            <person name="Akiyama T."/>
            <person name="Toyoshima K."/>
        </authorList>
    </citation>
    <scope>INTERACTION WITH FGR</scope>
</reference>
<reference key="10">
    <citation type="journal article" date="1996" name="Mol. Cell. Biol.">
        <title>In vivo and in vitro specificity of protein tyrosine kinases for immunoglobulin G receptor (FcgammaRII) phosphorylation.</title>
        <authorList>
            <person name="Bewarder N."/>
            <person name="Weinrich V."/>
            <person name="Budde P."/>
            <person name="Hartmann D."/>
            <person name="Flaswinkel H."/>
            <person name="Reth M."/>
            <person name="Frey J."/>
        </authorList>
    </citation>
    <scope>PHOSPHORYLATION AT TYR-292</scope>
</reference>
<reference key="11">
    <citation type="journal article" date="1997" name="Immunol. Lett.">
        <title>Fc gamma receptor type IIb induced recruitment of inositol and protein phosphatases to the signal transductory complex of human B-cell.</title>
        <authorList>
            <person name="Sarmay G."/>
            <person name="Koncz G."/>
            <person name="Pecht I."/>
            <person name="Gergely J."/>
        </authorList>
    </citation>
    <scope>INTERACTION WITH LYN</scope>
</reference>
<reference key="12">
    <citation type="journal article" date="2005" name="J. Gen. Virol.">
        <title>Measles virus nucleoprotein induces cell-proliferation arrest and apoptosis through NTAIL-NR and NCORE-FcgammaRIIB1 interactions, respectively.</title>
        <authorList>
            <person name="Laine D."/>
            <person name="Bourhis J.-M."/>
            <person name="Longhi S."/>
            <person name="Flacher M."/>
            <person name="Cassard L."/>
            <person name="Canard B."/>
            <person name="Sautes-Fridman C."/>
            <person name="Rabourdin-Combe C."/>
            <person name="Valentin H."/>
        </authorList>
    </citation>
    <scope>INTERACTION WITH MEASLES VIRUS N PROTEIN (MICROBIAL INFECTION)</scope>
</reference>
<reference key="13">
    <citation type="journal article" date="1999" name="EMBO J.">
        <title>Crystal structure of the soluble form of the human fcgamma-receptor IIb: a new member of the immunoglobulin superfamily at 1.7 A resolution.</title>
        <authorList>
            <person name="Sondermann P."/>
            <person name="Huber R."/>
            <person name="Jacob U."/>
        </authorList>
    </citation>
    <scope>X-RAY CRYSTALLOGRAPHY (1.74 ANGSTROMS) OF 46-217</scope>
    <scope>DISULFIDE BONDS</scope>
</reference>
<reference key="14">
    <citation type="journal article" date="1993" name="Int. Immunol.">
        <title>Interaction of a human Fc gamma RIIb1 (CD32) isoform with murine and human IgG subclasses.</title>
        <authorList>
            <person name="Warmerdam P.A."/>
            <person name="van den Herik-Oudijk I.E."/>
            <person name="Parren P.W."/>
            <person name="Westerdaal N.A."/>
            <person name="van de Winkel J.G."/>
            <person name="Capel P.J."/>
        </authorList>
    </citation>
    <scope>VARIANT ASP-258</scope>
</reference>
<reference key="15">
    <citation type="journal article" date="2007" name="Proc. Natl. Acad. Sci. U.S.A.">
        <title>Systemic lupus erythematosus-associated defects in the inhibitory receptor FcgammaRIIb reduce susceptibility to malaria.</title>
        <authorList>
            <person name="Clatworthy M.R."/>
            <person name="Willcocks L."/>
            <person name="Urban B."/>
            <person name="Langhorne J."/>
            <person name="Williams T.N."/>
            <person name="Peshu N."/>
            <person name="Watkins N.A."/>
            <person name="Floto R.A."/>
            <person name="Smith K.G."/>
        </authorList>
    </citation>
    <scope>POLYMORPHISM</scope>
    <scope>INVOLVEMENT IN RESISTANCE TO MALARIA</scope>
    <scope>VARIANT THR-232</scope>
    <scope>CHARACTERIZATION OF VARIANT THR-232</scope>
</reference>
<reference key="16">
    <citation type="journal article" date="2010" name="Proc. Natl. Acad. Sci. U.S.A.">
        <title>A defunctioning polymorphism in FCGR2B is associated with protection against malaria but susceptibility to systemic lupus erythematosus.</title>
        <authorList>
            <person name="Willcocks L.C."/>
            <person name="Carr E.J."/>
            <person name="Niederer H.A."/>
            <person name="Rayner T.F."/>
            <person name="Williams T.N."/>
            <person name="Yang W."/>
            <person name="Scott J.A."/>
            <person name="Urban B.C."/>
            <person name="Peshu N."/>
            <person name="Vyse T.J."/>
            <person name="Lau Y.L."/>
            <person name="Lyons P.A."/>
            <person name="Smith K.G."/>
        </authorList>
    </citation>
    <scope>POLYMORPHISM</scope>
    <scope>INVOLVEMENT IN SLE</scope>
    <scope>VARIANT THR-232</scope>
    <scope>INVOLVEMENT IN RESISTANCE TO MALARIA</scope>
</reference>
<feature type="signal peptide" evidence="1">
    <location>
        <begin position="1"/>
        <end position="42"/>
    </location>
</feature>
<feature type="chain" id="PRO_0000015147" description="Low affinity immunoglobulin gamma Fc region receptor II-b">
    <location>
        <begin position="43"/>
        <end position="310"/>
    </location>
</feature>
<feature type="topological domain" description="Extracellular" evidence="1">
    <location>
        <begin position="43"/>
        <end position="217"/>
    </location>
</feature>
<feature type="transmembrane region" description="Helical" evidence="1">
    <location>
        <begin position="218"/>
        <end position="240"/>
    </location>
</feature>
<feature type="topological domain" description="Cytoplasmic" evidence="1">
    <location>
        <begin position="241"/>
        <end position="310"/>
    </location>
</feature>
<feature type="domain" description="Ig-like C2-type 1">
    <location>
        <begin position="48"/>
        <end position="127"/>
    </location>
</feature>
<feature type="domain" description="Ig-like C2-type 2">
    <location>
        <begin position="131"/>
        <end position="213"/>
    </location>
</feature>
<feature type="short sequence motif" description="ITIM motif">
    <location>
        <begin position="290"/>
        <end position="295"/>
    </location>
</feature>
<feature type="modified residue" description="Phosphotyrosine; by SRC-type Tyr-kinases" evidence="11">
    <location>
        <position position="292"/>
    </location>
</feature>
<feature type="glycosylation site" description="N-linked (GlcNAc...) asparagine" evidence="1">
    <location>
        <position position="106"/>
    </location>
</feature>
<feature type="glycosylation site" description="N-linked (GlcNAc...) asparagine" evidence="1">
    <location>
        <position position="180"/>
    </location>
</feature>
<feature type="glycosylation site" description="N-linked (GlcNAc...) asparagine" evidence="1">
    <location>
        <position position="187"/>
    </location>
</feature>
<feature type="disulfide bond" evidence="2 3">
    <location>
        <begin position="71"/>
        <end position="113"/>
    </location>
</feature>
<feature type="disulfide bond" evidence="2 3">
    <location>
        <begin position="152"/>
        <end position="196"/>
    </location>
</feature>
<feature type="splice variant" id="VSP_002642" description="In isoform IIB3." evidence="16">
    <location>
        <begin position="39"/>
        <end position="45"/>
    </location>
</feature>
<feature type="splice variant" id="VSP_058635" description="In isoform 4 and isoform 5." evidence="18">
    <location>
        <position position="46"/>
    </location>
</feature>
<feature type="splice variant" id="VSP_002643" description="In isoform IIB2 and isoform 5." evidence="14 15 16 17 18 19">
    <location>
        <begin position="254"/>
        <end position="272"/>
    </location>
</feature>
<feature type="sequence variant" id="VAR_059430" description="In dbSNP:rs5017567.">
    <original>Q</original>
    <variation>P</variation>
    <location>
        <position position="83"/>
    </location>
</feature>
<feature type="sequence variant" id="VAR_027045" description="In dbSNP:rs1050499." evidence="8">
    <original>Y</original>
    <variation>F</variation>
    <location>
        <position position="205"/>
    </location>
</feature>
<feature type="sequence variant" id="VAR_015515" description="Risk factor for SLE; confers resistance to malaria; found at an increased frequency in African and Asian populations from areas where malaria is endemic; enhances phagocytosis of Plasmodium falciparum-infected erythrocytes in vitro; dbSNP:rs1050501." evidence="4 6 7 13">
    <original>I</original>
    <variation>T</variation>
    <location>
        <position position="232"/>
    </location>
</feature>
<feature type="sequence variant" id="VAR_008798" description="In dbSNP:rs148534844." evidence="10">
    <original>Y</original>
    <variation>D</variation>
    <location>
        <position position="258"/>
    </location>
</feature>
<feature type="sequence conflict" description="In Ref. 2; CAA35644/CAA35645." evidence="20" ref="2">
    <original>D</original>
    <variation>I</variation>
    <location>
        <position position="178"/>
    </location>
</feature>
<feature type="sequence conflict" description="In Ref. 2; CAA35644/CAA35645." evidence="20" ref="2">
    <original>T</original>
    <variation>I</variation>
    <location>
        <position position="230"/>
    </location>
</feature>
<feature type="sequence conflict" description="In Ref. 2; CAA35644/CAA35645." evidence="20" ref="2">
    <original>V</original>
    <variation>G</variation>
    <location>
        <position position="242"/>
    </location>
</feature>
<feature type="sequence conflict" description="In Ref. 2; CAA35644/CAA35645." evidence="20" ref="2">
    <original>P</original>
    <variation>S</variation>
    <location>
        <position position="275"/>
    </location>
</feature>
<feature type="strand" evidence="21">
    <location>
        <begin position="51"/>
        <end position="56"/>
    </location>
</feature>
<feature type="strand" evidence="21">
    <location>
        <begin position="59"/>
        <end position="62"/>
    </location>
</feature>
<feature type="strand" evidence="21">
    <location>
        <begin position="66"/>
        <end position="72"/>
    </location>
</feature>
<feature type="strand" evidence="21">
    <location>
        <begin position="83"/>
        <end position="86"/>
    </location>
</feature>
<feature type="strand" evidence="21">
    <location>
        <begin position="96"/>
        <end position="102"/>
    </location>
</feature>
<feature type="helix" evidence="21">
    <location>
        <begin position="105"/>
        <end position="107"/>
    </location>
</feature>
<feature type="strand" evidence="21">
    <location>
        <begin position="109"/>
        <end position="114"/>
    </location>
</feature>
<feature type="strand" evidence="22">
    <location>
        <begin position="116"/>
        <end position="118"/>
    </location>
</feature>
<feature type="strand" evidence="21">
    <location>
        <begin position="124"/>
        <end position="129"/>
    </location>
</feature>
<feature type="strand" evidence="21">
    <location>
        <begin position="131"/>
        <end position="136"/>
    </location>
</feature>
<feature type="strand" evidence="21">
    <location>
        <begin position="140"/>
        <end position="142"/>
    </location>
</feature>
<feature type="strand" evidence="21">
    <location>
        <begin position="148"/>
        <end position="154"/>
    </location>
</feature>
<feature type="helix" evidence="21">
    <location>
        <begin position="155"/>
        <end position="157"/>
    </location>
</feature>
<feature type="strand" evidence="21">
    <location>
        <begin position="161"/>
        <end position="167"/>
    </location>
</feature>
<feature type="strand" evidence="21">
    <location>
        <begin position="170"/>
        <end position="177"/>
    </location>
</feature>
<feature type="strand" evidence="21">
    <location>
        <begin position="180"/>
        <end position="183"/>
    </location>
</feature>
<feature type="helix" evidence="21">
    <location>
        <begin position="188"/>
        <end position="190"/>
    </location>
</feature>
<feature type="strand" evidence="21">
    <location>
        <begin position="192"/>
        <end position="200"/>
    </location>
</feature>
<feature type="strand" evidence="21">
    <location>
        <begin position="203"/>
        <end position="206"/>
    </location>
</feature>
<feature type="strand" evidence="21">
    <location>
        <begin position="210"/>
        <end position="214"/>
    </location>
</feature>
<organism>
    <name type="scientific">Homo sapiens</name>
    <name type="common">Human</name>
    <dbReference type="NCBI Taxonomy" id="9606"/>
    <lineage>
        <taxon>Eukaryota</taxon>
        <taxon>Metazoa</taxon>
        <taxon>Chordata</taxon>
        <taxon>Craniata</taxon>
        <taxon>Vertebrata</taxon>
        <taxon>Euteleostomi</taxon>
        <taxon>Mammalia</taxon>
        <taxon>Eutheria</taxon>
        <taxon>Euarchontoglires</taxon>
        <taxon>Primates</taxon>
        <taxon>Haplorrhini</taxon>
        <taxon>Catarrhini</taxon>
        <taxon>Hominidae</taxon>
        <taxon>Homo</taxon>
    </lineage>
</organism>
<keyword id="KW-0002">3D-structure</keyword>
<keyword id="KW-0025">Alternative splicing</keyword>
<keyword id="KW-1003">Cell membrane</keyword>
<keyword id="KW-0160">Chromosomal rearrangement</keyword>
<keyword id="KW-1015">Disulfide bond</keyword>
<keyword id="KW-0325">Glycoprotein</keyword>
<keyword id="KW-0945">Host-virus interaction</keyword>
<keyword id="KW-0390">IgG-binding protein</keyword>
<keyword id="KW-0393">Immunoglobulin domain</keyword>
<keyword id="KW-0472">Membrane</keyword>
<keyword id="KW-0597">Phosphoprotein</keyword>
<keyword id="KW-1267">Proteomics identification</keyword>
<keyword id="KW-0656">Proto-oncogene</keyword>
<keyword id="KW-0675">Receptor</keyword>
<keyword id="KW-1185">Reference proteome</keyword>
<keyword id="KW-0677">Repeat</keyword>
<keyword id="KW-0732">Signal</keyword>
<keyword id="KW-0772">Systemic lupus erythematosus</keyword>
<keyword id="KW-0812">Transmembrane</keyword>
<keyword id="KW-1133">Transmembrane helix</keyword>
<gene>
    <name type="primary">FCGR2B</name>
    <name type="synonym">CD32</name>
    <name type="synonym">FCG2</name>
    <name type="synonym">IGFR2</name>
</gene>
<dbReference type="EMBL" id="U87560">
    <property type="protein sequence ID" value="AAD00627.1"/>
    <property type="molecule type" value="mRNA"/>
</dbReference>
<dbReference type="EMBL" id="U87561">
    <property type="protein sequence ID" value="AAD00628.1"/>
    <property type="molecule type" value="mRNA"/>
</dbReference>
<dbReference type="EMBL" id="U87562">
    <property type="protein sequence ID" value="AAD00629.1"/>
    <property type="molecule type" value="mRNA"/>
</dbReference>
<dbReference type="EMBL" id="U87563">
    <property type="protein sequence ID" value="AAD00630.1"/>
    <property type="molecule type" value="mRNA"/>
</dbReference>
<dbReference type="EMBL" id="U87564">
    <property type="protein sequence ID" value="AAD00631.1"/>
    <property type="molecule type" value="mRNA"/>
</dbReference>
<dbReference type="EMBL" id="U87565">
    <property type="protein sequence ID" value="AAD00632.1"/>
    <property type="molecule type" value="mRNA"/>
</dbReference>
<dbReference type="EMBL" id="U87566">
    <property type="protein sequence ID" value="AAD00633.1"/>
    <property type="molecule type" value="mRNA"/>
</dbReference>
<dbReference type="EMBL" id="U87567">
    <property type="protein sequence ID" value="AAD00634.1"/>
    <property type="molecule type" value="mRNA"/>
</dbReference>
<dbReference type="EMBL" id="U87568">
    <property type="protein sequence ID" value="AAD00635.1"/>
    <property type="molecule type" value="mRNA"/>
</dbReference>
<dbReference type="EMBL" id="U87569">
    <property type="protein sequence ID" value="AAD00636.1"/>
    <property type="molecule type" value="mRNA"/>
</dbReference>
<dbReference type="EMBL" id="U87570">
    <property type="protein sequence ID" value="AAD00637.1"/>
    <property type="molecule type" value="mRNA"/>
</dbReference>
<dbReference type="EMBL" id="U87571">
    <property type="protein sequence ID" value="AAD00638.1"/>
    <property type="molecule type" value="mRNA"/>
</dbReference>
<dbReference type="EMBL" id="U87572">
    <property type="protein sequence ID" value="AAD00639.1"/>
    <property type="molecule type" value="mRNA"/>
</dbReference>
<dbReference type="EMBL" id="U87573">
    <property type="protein sequence ID" value="AAD00640.1"/>
    <property type="molecule type" value="mRNA"/>
</dbReference>
<dbReference type="EMBL" id="U87574">
    <property type="protein sequence ID" value="AAD00641.1"/>
    <property type="molecule type" value="mRNA"/>
</dbReference>
<dbReference type="EMBL" id="U87575">
    <property type="protein sequence ID" value="AAD00642.1"/>
    <property type="molecule type" value="mRNA"/>
</dbReference>
<dbReference type="EMBL" id="U87576">
    <property type="protein sequence ID" value="AAD00643.1"/>
    <property type="molecule type" value="mRNA"/>
</dbReference>
<dbReference type="EMBL" id="U87577">
    <property type="protein sequence ID" value="AAD00644.1"/>
    <property type="molecule type" value="mRNA"/>
</dbReference>
<dbReference type="EMBL" id="X17653">
    <property type="protein sequence ID" value="CAA35644.1"/>
    <property type="molecule type" value="mRNA"/>
</dbReference>
<dbReference type="EMBL" id="X17653">
    <property type="protein sequence ID" value="CAA35645.1"/>
    <property type="status" value="ALT_INIT"/>
    <property type="molecule type" value="mRNA"/>
</dbReference>
<dbReference type="EMBL" id="M31933">
    <property type="protein sequence ID" value="AAA35841.1"/>
    <property type="molecule type" value="mRNA"/>
</dbReference>
<dbReference type="EMBL" id="M31934">
    <property type="protein sequence ID" value="AAA35842.1"/>
    <property type="molecule type" value="mRNA"/>
</dbReference>
<dbReference type="EMBL" id="M31935">
    <property type="protein sequence ID" value="AAA35843.1"/>
    <property type="molecule type" value="mRNA"/>
</dbReference>
<dbReference type="EMBL" id="X52473">
    <property type="protein sequence ID" value="CAA36713.1"/>
    <property type="molecule type" value="mRNA"/>
</dbReference>
<dbReference type="EMBL" id="CR407635">
    <property type="protein sequence ID" value="CAG28563.1"/>
    <property type="molecule type" value="mRNA"/>
</dbReference>
<dbReference type="EMBL" id="AL359541">
    <property type="status" value="NOT_ANNOTATED_CDS"/>
    <property type="molecule type" value="Genomic_DNA"/>
</dbReference>
<dbReference type="EMBL" id="BC031992">
    <property type="protein sequence ID" value="AAH31992.1"/>
    <property type="molecule type" value="mRNA"/>
</dbReference>
<dbReference type="EMBL" id="BC146678">
    <property type="protein sequence ID" value="AAI46679.1"/>
    <property type="molecule type" value="mRNA"/>
</dbReference>
<dbReference type="EMBL" id="AB050934">
    <property type="protein sequence ID" value="BAB92093.1"/>
    <property type="molecule type" value="mRNA"/>
</dbReference>
<dbReference type="CCDS" id="CCDS30924.1">
    <molecule id="P31994-1"/>
</dbReference>
<dbReference type="CCDS" id="CCDS30925.1">
    <molecule id="P31994-2"/>
</dbReference>
<dbReference type="CCDS" id="CCDS53414.1">
    <molecule id="P31994-3"/>
</dbReference>
<dbReference type="PIR" id="JL0119">
    <property type="entry name" value="JL0119"/>
</dbReference>
<dbReference type="RefSeq" id="NP_001002273.1">
    <molecule id="P31994-5"/>
    <property type="nucleotide sequence ID" value="NM_001002273.3"/>
</dbReference>
<dbReference type="RefSeq" id="NP_001002274.1">
    <molecule id="P31994-2"/>
    <property type="nucleotide sequence ID" value="NM_001002274.3"/>
</dbReference>
<dbReference type="RefSeq" id="NP_001002275.1">
    <molecule id="P31994-4"/>
    <property type="nucleotide sequence ID" value="NM_001002275.3"/>
</dbReference>
<dbReference type="RefSeq" id="NP_001177757.1">
    <molecule id="P31994-3"/>
    <property type="nucleotide sequence ID" value="NM_001190828.2"/>
</dbReference>
<dbReference type="RefSeq" id="NP_001381406.1">
    <molecule id="P31994-1"/>
    <property type="nucleotide sequence ID" value="NM_001394477.1"/>
</dbReference>
<dbReference type="RefSeq" id="NP_003992.3">
    <molecule id="P31994-1"/>
    <property type="nucleotide sequence ID" value="NM_004001.4"/>
</dbReference>
<dbReference type="RefSeq" id="XP_016856160.1">
    <property type="nucleotide sequence ID" value="XM_017000671.1"/>
</dbReference>
<dbReference type="RefSeq" id="XP_016856161.1">
    <property type="nucleotide sequence ID" value="XM_017000672.1"/>
</dbReference>
<dbReference type="PDB" id="2FCB">
    <property type="method" value="X-ray"/>
    <property type="resolution" value="1.74 A"/>
    <property type="chains" value="A=46-217"/>
</dbReference>
<dbReference type="PDB" id="3WJJ">
    <property type="method" value="X-ray"/>
    <property type="resolution" value="2.60 A"/>
    <property type="chains" value="C=45-217"/>
</dbReference>
<dbReference type="PDB" id="5OCC">
    <property type="method" value="X-ray"/>
    <property type="resolution" value="2.50 A"/>
    <property type="chains" value="A=43-218"/>
</dbReference>
<dbReference type="PDBsum" id="2FCB"/>
<dbReference type="PDBsum" id="3WJJ"/>
<dbReference type="PDBsum" id="5OCC"/>
<dbReference type="SMR" id="P31994"/>
<dbReference type="BioGRID" id="108507">
    <property type="interactions" value="16"/>
</dbReference>
<dbReference type="DIP" id="DIP-36638N"/>
<dbReference type="ELM" id="P31994"/>
<dbReference type="FunCoup" id="P31994">
    <property type="interactions" value="347"/>
</dbReference>
<dbReference type="IntAct" id="P31994">
    <property type="interactions" value="21"/>
</dbReference>
<dbReference type="MINT" id="P31994"/>
<dbReference type="STRING" id="9606.ENSP00000351497"/>
<dbReference type="ChEMBL" id="CHEMBL4662940"/>
<dbReference type="DrugBank" id="DB00054">
    <property type="generic name" value="Abciximab"/>
</dbReference>
<dbReference type="DrugBank" id="DB00087">
    <property type="generic name" value="Alemtuzumab"/>
</dbReference>
<dbReference type="DrugBank" id="DB00098">
    <property type="generic name" value="Antithymocyte immunoglobulin (rabbit)"/>
</dbReference>
<dbReference type="DrugBank" id="DB00112">
    <property type="generic name" value="Bevacizumab"/>
</dbReference>
<dbReference type="DrugBank" id="DB00111">
    <property type="generic name" value="Daclizumab"/>
</dbReference>
<dbReference type="DrugBank" id="DB00005">
    <property type="generic name" value="Etanercept"/>
</dbReference>
<dbReference type="DrugBank" id="DB00028">
    <property type="generic name" value="Human immunoglobulin G"/>
</dbReference>
<dbReference type="DrugBank" id="DB00110">
    <property type="generic name" value="Palivizumab"/>
</dbReference>
<dbReference type="DrugBank" id="DB11767">
    <property type="generic name" value="Sarilumab"/>
</dbReference>
<dbReference type="DrugBank" id="DB00081">
    <property type="generic name" value="Tositumomab"/>
</dbReference>
<dbReference type="MEROPS" id="I43.001"/>
<dbReference type="GlyConnect" id="2999">
    <molecule id="P31994-3"/>
    <property type="glycosylation" value="29 N-Linked glycans"/>
</dbReference>
<dbReference type="GlyCosmos" id="P31994">
    <property type="glycosylation" value="3 sites, No reported glycans"/>
</dbReference>
<dbReference type="GlyGen" id="P31994">
    <property type="glycosylation" value="6 sites, 38 N-linked glycans (1 site)"/>
</dbReference>
<dbReference type="iPTMnet" id="P31994"/>
<dbReference type="PhosphoSitePlus" id="P31994"/>
<dbReference type="BioMuta" id="FCGR2B"/>
<dbReference type="DMDM" id="8039788"/>
<dbReference type="CPTAC" id="CPTAC-1183"/>
<dbReference type="MassIVE" id="P31994"/>
<dbReference type="PaxDb" id="9606-ENSP00000351497"/>
<dbReference type="PeptideAtlas" id="P31994"/>
<dbReference type="ProteomicsDB" id="54822">
    <molecule id="P31994-1"/>
</dbReference>
<dbReference type="ProteomicsDB" id="54823">
    <molecule id="P31994-2"/>
</dbReference>
<dbReference type="ProteomicsDB" id="54824">
    <molecule id="P31994-3"/>
</dbReference>
<dbReference type="ABCD" id="P31994">
    <property type="antibodies" value="7 sequenced antibodies"/>
</dbReference>
<dbReference type="Antibodypedia" id="3585">
    <property type="antibodies" value="1089 antibodies from 41 providers"/>
</dbReference>
<dbReference type="DNASU" id="2213"/>
<dbReference type="Ensembl" id="ENST00000236937.13">
    <molecule id="P31994-2"/>
    <property type="protein sequence ID" value="ENSP00000236937.9"/>
    <property type="gene ID" value="ENSG00000072694.22"/>
</dbReference>
<dbReference type="Ensembl" id="ENST00000358671.10">
    <molecule id="P31994-1"/>
    <property type="protein sequence ID" value="ENSP00000351497.5"/>
    <property type="gene ID" value="ENSG00000072694.22"/>
</dbReference>
<dbReference type="Ensembl" id="ENST00000367961.8">
    <molecule id="P31994-3"/>
    <property type="protein sequence ID" value="ENSP00000356938.4"/>
    <property type="gene ID" value="ENSG00000072694.22"/>
</dbReference>
<dbReference type="GeneID" id="2213"/>
<dbReference type="KEGG" id="hsa:2213"/>
<dbReference type="MANE-Select" id="ENST00000358671.10">
    <property type="protein sequence ID" value="ENSP00000351497.5"/>
    <property type="RefSeq nucleotide sequence ID" value="NM_001394477.1"/>
    <property type="RefSeq protein sequence ID" value="NP_001381406.1"/>
</dbReference>
<dbReference type="UCSC" id="uc001gaz.3">
    <molecule id="P31994-1"/>
    <property type="organism name" value="human"/>
</dbReference>
<dbReference type="AGR" id="HGNC:3618"/>
<dbReference type="CTD" id="2213"/>
<dbReference type="DisGeNET" id="2213"/>
<dbReference type="GeneCards" id="FCGR2B"/>
<dbReference type="HGNC" id="HGNC:3618">
    <property type="gene designation" value="FCGR2B"/>
</dbReference>
<dbReference type="HPA" id="ENSG00000072694">
    <property type="expression patterns" value="Tissue enriched (placenta)"/>
</dbReference>
<dbReference type="MalaCards" id="FCGR2B"/>
<dbReference type="MIM" id="152700">
    <property type="type" value="phenotype"/>
</dbReference>
<dbReference type="MIM" id="604590">
    <property type="type" value="gene"/>
</dbReference>
<dbReference type="MIM" id="611162">
    <property type="type" value="phenotype"/>
</dbReference>
<dbReference type="neXtProt" id="NX_P31994"/>
<dbReference type="OpenTargets" id="ENSG00000072694"/>
<dbReference type="Orphanet" id="536">
    <property type="disease" value="Systemic lupus erythematosus"/>
</dbReference>
<dbReference type="PharmGKB" id="PA28064"/>
<dbReference type="VEuPathDB" id="HostDB:ENSG00000072694"/>
<dbReference type="eggNOG" id="ENOG502SVEW">
    <property type="taxonomic scope" value="Eukaryota"/>
</dbReference>
<dbReference type="GeneTree" id="ENSGT01050000244808"/>
<dbReference type="HOGENOM" id="CLU_023383_1_2_1"/>
<dbReference type="InParanoid" id="P31994"/>
<dbReference type="OMA" id="DYNIRAD"/>
<dbReference type="OrthoDB" id="6151406at2759"/>
<dbReference type="PAN-GO" id="P31994">
    <property type="GO annotations" value="4 GO annotations based on evolutionary models"/>
</dbReference>
<dbReference type="PhylomeDB" id="P31994"/>
<dbReference type="TreeFam" id="TF335097"/>
<dbReference type="PathwayCommons" id="P31994"/>
<dbReference type="Reactome" id="R-HSA-198933">
    <property type="pathway name" value="Immunoregulatory interactions between a Lymphoid and a non-Lymphoid cell"/>
</dbReference>
<dbReference type="SignaLink" id="P31994"/>
<dbReference type="SIGNOR" id="P31994"/>
<dbReference type="BioGRID-ORCS" id="2213">
    <property type="hits" value="14 hits in 1145 CRISPR screens"/>
</dbReference>
<dbReference type="ChiTaRS" id="FCGR2B">
    <property type="organism name" value="human"/>
</dbReference>
<dbReference type="EvolutionaryTrace" id="P31994"/>
<dbReference type="GeneWiki" id="FCGR2B"/>
<dbReference type="GenomeRNAi" id="2213"/>
<dbReference type="Pharos" id="P31994">
    <property type="development level" value="Tbio"/>
</dbReference>
<dbReference type="PRO" id="PR:P31994"/>
<dbReference type="Proteomes" id="UP000005640">
    <property type="component" value="Chromosome 1"/>
</dbReference>
<dbReference type="RNAct" id="P31994">
    <property type="molecule type" value="protein"/>
</dbReference>
<dbReference type="Bgee" id="ENSG00000072694">
    <property type="expression patterns" value="Expressed in placenta and 150 other cell types or tissues"/>
</dbReference>
<dbReference type="GO" id="GO:0044297">
    <property type="term" value="C:cell body"/>
    <property type="evidence" value="ECO:0000250"/>
    <property type="project" value="BHF-UCL"/>
</dbReference>
<dbReference type="GO" id="GO:0043197">
    <property type="term" value="C:dendritic spine"/>
    <property type="evidence" value="ECO:0000250"/>
    <property type="project" value="BHF-UCL"/>
</dbReference>
<dbReference type="GO" id="GO:0009897">
    <property type="term" value="C:external side of plasma membrane"/>
    <property type="evidence" value="ECO:0000250"/>
    <property type="project" value="ARUK-UCL"/>
</dbReference>
<dbReference type="GO" id="GO:0005886">
    <property type="term" value="C:plasma membrane"/>
    <property type="evidence" value="ECO:0000314"/>
    <property type="project" value="ARUK-UCL"/>
</dbReference>
<dbReference type="GO" id="GO:0001540">
    <property type="term" value="F:amyloid-beta binding"/>
    <property type="evidence" value="ECO:0000353"/>
    <property type="project" value="ARUK-UCL"/>
</dbReference>
<dbReference type="GO" id="GO:0019864">
    <property type="term" value="F:IgG binding"/>
    <property type="evidence" value="ECO:0000314"/>
    <property type="project" value="ARUK-UCL"/>
</dbReference>
<dbReference type="GO" id="GO:0019770">
    <property type="term" value="F:IgG receptor activity"/>
    <property type="evidence" value="ECO:0000318"/>
    <property type="project" value="GO_Central"/>
</dbReference>
<dbReference type="GO" id="GO:0019772">
    <property type="term" value="F:low-affinity IgG receptor activity"/>
    <property type="evidence" value="ECO:0000314"/>
    <property type="project" value="ARUK-UCL"/>
</dbReference>
<dbReference type="GO" id="GO:0044877">
    <property type="term" value="F:protein-containing complex binding"/>
    <property type="evidence" value="ECO:0000353"/>
    <property type="project" value="ARUK-UCL"/>
</dbReference>
<dbReference type="GO" id="GO:0001788">
    <property type="term" value="P:antibody-dependent cellular cytotoxicity"/>
    <property type="evidence" value="ECO:0000318"/>
    <property type="project" value="GO_Central"/>
</dbReference>
<dbReference type="GO" id="GO:0019886">
    <property type="term" value="P:antigen processing and presentation of exogenous peptide antigen via MHC class II"/>
    <property type="evidence" value="ECO:0000250"/>
    <property type="project" value="ARUK-UCL"/>
</dbReference>
<dbReference type="GO" id="GO:0007166">
    <property type="term" value="P:cell surface receptor signaling pathway"/>
    <property type="evidence" value="ECO:0000318"/>
    <property type="project" value="GO_Central"/>
</dbReference>
<dbReference type="GO" id="GO:1904646">
    <property type="term" value="P:cellular response to amyloid-beta"/>
    <property type="evidence" value="ECO:0000250"/>
    <property type="project" value="ARUK-UCL"/>
</dbReference>
<dbReference type="GO" id="GO:0071219">
    <property type="term" value="P:cellular response to molecule of bacterial origin"/>
    <property type="evidence" value="ECO:0000250"/>
    <property type="project" value="ARUK-UCL"/>
</dbReference>
<dbReference type="GO" id="GO:0021549">
    <property type="term" value="P:cerebellum development"/>
    <property type="evidence" value="ECO:0000250"/>
    <property type="project" value="BHF-UCL"/>
</dbReference>
<dbReference type="GO" id="GO:0006952">
    <property type="term" value="P:defense response"/>
    <property type="evidence" value="ECO:0000250"/>
    <property type="project" value="ARUK-UCL"/>
</dbReference>
<dbReference type="GO" id="GO:0038094">
    <property type="term" value="P:Fc-gamma receptor signaling pathway"/>
    <property type="evidence" value="ECO:0000314"/>
    <property type="project" value="ARUK-UCL"/>
</dbReference>
<dbReference type="GO" id="GO:0002316">
    <property type="term" value="P:follicular B cell differentiation"/>
    <property type="evidence" value="ECO:0000304"/>
    <property type="project" value="ARUK-UCL"/>
</dbReference>
<dbReference type="GO" id="GO:0002266">
    <property type="term" value="P:follicular dendritic cell activation"/>
    <property type="evidence" value="ECO:0000304"/>
    <property type="project" value="ARUK-UCL"/>
</dbReference>
<dbReference type="GO" id="GO:0002436">
    <property type="term" value="P:immune complex clearance by monocytes and macrophages"/>
    <property type="evidence" value="ECO:0000304"/>
    <property type="project" value="ARUK-UCL"/>
</dbReference>
<dbReference type="GO" id="GO:0002252">
    <property type="term" value="P:immune effector process"/>
    <property type="evidence" value="ECO:0000314"/>
    <property type="project" value="ARUK-UCL"/>
</dbReference>
<dbReference type="GO" id="GO:0016064">
    <property type="term" value="P:immunoglobulin mediated immune response"/>
    <property type="evidence" value="ECO:0000250"/>
    <property type="project" value="ARUK-UCL"/>
</dbReference>
<dbReference type="GO" id="GO:0006954">
    <property type="term" value="P:inflammatory response"/>
    <property type="evidence" value="ECO:0000304"/>
    <property type="project" value="ARUK-UCL"/>
</dbReference>
<dbReference type="GO" id="GO:0002313">
    <property type="term" value="P:mature B cell differentiation involved in immune response"/>
    <property type="evidence" value="ECO:0000304"/>
    <property type="project" value="ARUK-UCL"/>
</dbReference>
<dbReference type="GO" id="GO:0002865">
    <property type="term" value="P:negative regulation of acute inflammatory response to antigenic stimulus"/>
    <property type="evidence" value="ECO:0000250"/>
    <property type="project" value="ARUK-UCL"/>
</dbReference>
<dbReference type="GO" id="GO:0001814">
    <property type="term" value="P:negative regulation of antibody-dependent cellular cytotoxicity"/>
    <property type="evidence" value="ECO:0000304"/>
    <property type="project" value="ARUK-UCL"/>
</dbReference>
<dbReference type="GO" id="GO:0050869">
    <property type="term" value="P:negative regulation of B cell activation"/>
    <property type="evidence" value="ECO:0000304"/>
    <property type="project" value="ARUK-UCL"/>
</dbReference>
<dbReference type="GO" id="GO:0030889">
    <property type="term" value="P:negative regulation of B cell proliferation"/>
    <property type="evidence" value="ECO:0000250"/>
    <property type="project" value="ARUK-UCL"/>
</dbReference>
<dbReference type="GO" id="GO:0050859">
    <property type="term" value="P:negative regulation of B cell receptor signaling pathway"/>
    <property type="evidence" value="ECO:0000315"/>
    <property type="project" value="ARUK-UCL"/>
</dbReference>
<dbReference type="GO" id="GO:0001818">
    <property type="term" value="P:negative regulation of cytokine production"/>
    <property type="evidence" value="ECO:0000304"/>
    <property type="project" value="ARUK-UCL"/>
</dbReference>
<dbReference type="GO" id="GO:0043318">
    <property type="term" value="P:negative regulation of cytotoxic T cell degranulation"/>
    <property type="evidence" value="ECO:0000304"/>
    <property type="project" value="ARUK-UCL"/>
</dbReference>
<dbReference type="GO" id="GO:0002605">
    <property type="term" value="P:negative regulation of dendritic cell antigen processing and presentation"/>
    <property type="evidence" value="ECO:0000304"/>
    <property type="project" value="ARUK-UCL"/>
</dbReference>
<dbReference type="GO" id="GO:2001199">
    <property type="term" value="P:negative regulation of dendritic cell differentiation"/>
    <property type="evidence" value="ECO:0000304"/>
    <property type="project" value="ARUK-UCL"/>
</dbReference>
<dbReference type="GO" id="GO:0002924">
    <property type="term" value="P:negative regulation of humoral immune response mediated by circulating immunoglobulin"/>
    <property type="evidence" value="ECO:0000250"/>
    <property type="project" value="ARUK-UCL"/>
</dbReference>
<dbReference type="GO" id="GO:0050777">
    <property type="term" value="P:negative regulation of immune response"/>
    <property type="evidence" value="ECO:0000250"/>
    <property type="project" value="ARUK-UCL"/>
</dbReference>
<dbReference type="GO" id="GO:0002638">
    <property type="term" value="P:negative regulation of immunoglobulin production"/>
    <property type="evidence" value="ECO:0000250"/>
    <property type="project" value="ARUK-UCL"/>
</dbReference>
<dbReference type="GO" id="GO:0032693">
    <property type="term" value="P:negative regulation of interleukin-10 production"/>
    <property type="evidence" value="ECO:0000250"/>
    <property type="project" value="ARUK-UCL"/>
</dbReference>
<dbReference type="GO" id="GO:0043031">
    <property type="term" value="P:negative regulation of macrophage activation"/>
    <property type="evidence" value="ECO:0000304"/>
    <property type="project" value="ARUK-UCL"/>
</dbReference>
<dbReference type="GO" id="GO:1902564">
    <property type="term" value="P:negative regulation of neutrophil activation"/>
    <property type="evidence" value="ECO:0000304"/>
    <property type="project" value="ARUK-UCL"/>
</dbReference>
<dbReference type="GO" id="GO:0050765">
    <property type="term" value="P:negative regulation of phagocytosis"/>
    <property type="evidence" value="ECO:0000304"/>
    <property type="project" value="ARUK-UCL"/>
</dbReference>
<dbReference type="GO" id="GO:0001811">
    <property type="term" value="P:negative regulation of type I hypersensitivity"/>
    <property type="evidence" value="ECO:0000250"/>
    <property type="project" value="ARUK-UCL"/>
</dbReference>
<dbReference type="GO" id="GO:0006909">
    <property type="term" value="P:phagocytosis"/>
    <property type="evidence" value="ECO:0000314"/>
    <property type="project" value="ARUK-UCL"/>
</dbReference>
<dbReference type="GO" id="GO:0006911">
    <property type="term" value="P:phagocytosis, engulfment"/>
    <property type="evidence" value="ECO:0000250"/>
    <property type="project" value="ARUK-UCL"/>
</dbReference>
<dbReference type="GO" id="GO:0002922">
    <property type="term" value="P:positive regulation of humoral immune response"/>
    <property type="evidence" value="ECO:0000304"/>
    <property type="project" value="ARUK-UCL"/>
</dbReference>
<dbReference type="GO" id="GO:0046330">
    <property type="term" value="P:positive regulation of JNK cascade"/>
    <property type="evidence" value="ECO:0000250"/>
    <property type="project" value="ARUK-UCL"/>
</dbReference>
<dbReference type="GO" id="GO:0050766">
    <property type="term" value="P:positive regulation of phagocytosis"/>
    <property type="evidence" value="ECO:0000250"/>
    <property type="project" value="ARUK-UCL"/>
</dbReference>
<dbReference type="GO" id="GO:1905898">
    <property type="term" value="P:positive regulation of response to endoplasmic reticulum stress"/>
    <property type="evidence" value="ECO:0000250"/>
    <property type="project" value="ARUK-UCL"/>
</dbReference>
<dbReference type="GO" id="GO:0032760">
    <property type="term" value="P:positive regulation of tumor necrosis factor production"/>
    <property type="evidence" value="ECO:0000318"/>
    <property type="project" value="GO_Central"/>
</dbReference>
<dbReference type="GO" id="GO:0006898">
    <property type="term" value="P:receptor-mediated endocytosis"/>
    <property type="evidence" value="ECO:0000314"/>
    <property type="project" value="ARUK-UCL"/>
</dbReference>
<dbReference type="GO" id="GO:0002819">
    <property type="term" value="P:regulation of adaptive immune response"/>
    <property type="evidence" value="ECO:0000304"/>
    <property type="project" value="ARUK-UCL"/>
</dbReference>
<dbReference type="GO" id="GO:0002622">
    <property type="term" value="P:regulation of B cell antigen processing and presentation"/>
    <property type="evidence" value="ECO:0000304"/>
    <property type="project" value="ARUK-UCL"/>
</dbReference>
<dbReference type="GO" id="GO:1902950">
    <property type="term" value="P:regulation of dendritic spine maintenance"/>
    <property type="evidence" value="ECO:0000316"/>
    <property type="project" value="ARUK-UCL"/>
</dbReference>
<dbReference type="GO" id="GO:1903381">
    <property type="term" value="P:regulation of endoplasmic reticulum stress-induced neuron intrinsic apoptotic signaling pathway"/>
    <property type="evidence" value="ECO:0000250"/>
    <property type="project" value="BHF-UCL"/>
</dbReference>
<dbReference type="GO" id="GO:0090264">
    <property type="term" value="P:regulation of immune complex clearance by monocytes and macrophages"/>
    <property type="evidence" value="ECO:0000304"/>
    <property type="project" value="ARUK-UCL"/>
</dbReference>
<dbReference type="GO" id="GO:0045088">
    <property type="term" value="P:regulation of innate immune response"/>
    <property type="evidence" value="ECO:0000304"/>
    <property type="project" value="ARUK-UCL"/>
</dbReference>
<dbReference type="GO" id="GO:0009617">
    <property type="term" value="P:response to bacterium"/>
    <property type="evidence" value="ECO:0000250"/>
    <property type="project" value="ARUK-UCL"/>
</dbReference>
<dbReference type="CDD" id="cd05752">
    <property type="entry name" value="Ig1_FcgammaR_like"/>
    <property type="match status" value="1"/>
</dbReference>
<dbReference type="CDD" id="cd05753">
    <property type="entry name" value="Ig2_FcgammaR_like"/>
    <property type="match status" value="1"/>
</dbReference>
<dbReference type="FunFam" id="2.60.40.10:FF:000217">
    <property type="entry name" value="High affinity immunoglobulin gamma Fc receptor I"/>
    <property type="match status" value="1"/>
</dbReference>
<dbReference type="FunFam" id="2.60.40.10:FF:000356">
    <property type="entry name" value="Low affinity immunoglobulin gamma Fc region receptor III-A"/>
    <property type="match status" value="1"/>
</dbReference>
<dbReference type="Gene3D" id="2.60.40.10">
    <property type="entry name" value="Immunoglobulins"/>
    <property type="match status" value="2"/>
</dbReference>
<dbReference type="InterPro" id="IPR007110">
    <property type="entry name" value="Ig-like_dom"/>
</dbReference>
<dbReference type="InterPro" id="IPR036179">
    <property type="entry name" value="Ig-like_dom_sf"/>
</dbReference>
<dbReference type="InterPro" id="IPR013783">
    <property type="entry name" value="Ig-like_fold"/>
</dbReference>
<dbReference type="InterPro" id="IPR050488">
    <property type="entry name" value="Ig_Fc_receptor"/>
</dbReference>
<dbReference type="InterPro" id="IPR003599">
    <property type="entry name" value="Ig_sub"/>
</dbReference>
<dbReference type="InterPro" id="IPR003598">
    <property type="entry name" value="Ig_sub2"/>
</dbReference>
<dbReference type="PANTHER" id="PTHR11481">
    <property type="entry name" value="IMMUNOGLOBULIN FC RECEPTOR"/>
    <property type="match status" value="1"/>
</dbReference>
<dbReference type="PANTHER" id="PTHR11481:SF97">
    <property type="entry name" value="LOW AFFINITY IMMUNOGLOBULIN GAMMA FC REGION RECEPTOR II-B-RELATED"/>
    <property type="match status" value="1"/>
</dbReference>
<dbReference type="Pfam" id="PF13895">
    <property type="entry name" value="Ig_2"/>
    <property type="match status" value="2"/>
</dbReference>
<dbReference type="SMART" id="SM00409">
    <property type="entry name" value="IG"/>
    <property type="match status" value="2"/>
</dbReference>
<dbReference type="SMART" id="SM00408">
    <property type="entry name" value="IGc2"/>
    <property type="match status" value="2"/>
</dbReference>
<dbReference type="SUPFAM" id="SSF48726">
    <property type="entry name" value="Immunoglobulin"/>
    <property type="match status" value="2"/>
</dbReference>
<dbReference type="PROSITE" id="PS50835">
    <property type="entry name" value="IG_LIKE"/>
    <property type="match status" value="2"/>
</dbReference>
<name>FCG2B_HUMAN</name>
<sequence>MGILSFLPVLATESDWADCKSPQPWGHMLLWTAVLFLAPVAGTPAAPPKAVLKLEPQWINVLQEDSVTLTCRGTHSPESDSIQWFHNGNLIPTHTQPSYRFKANNNDSGEYTCQTGQTSLSDPVHLTVLSEWLVLQTPHLEFQEGETIVLRCHSWKDKPLVKVTFFQNGKSKKFSRSDPNFSIPQANHSHSGDYHCTGNIGYTLYSSKPVTITVQAPSSSPMGIIVAVVTGIAVAAIVAAVVALIYCRKKRISALPGYPECREMGETLPEKPANPTNPDEADKVGAENTITYSLLMHPDALEEPDDQNRI</sequence>
<protein>
    <recommendedName>
        <fullName>Low affinity immunoglobulin gamma Fc region receptor II-b</fullName>
        <shortName>IgG Fc receptor II-b</shortName>
    </recommendedName>
    <alternativeName>
        <fullName>CDw32</fullName>
    </alternativeName>
    <alternativeName>
        <fullName>Fc-gamma RII-b</fullName>
        <shortName>Fc-gamma-RIIb</shortName>
        <shortName>FcRII-b</shortName>
    </alternativeName>
    <cdAntigenName>CD32</cdAntigenName>
</protein>
<evidence type="ECO:0000255" key="1"/>
<evidence type="ECO:0000255" key="2">
    <source>
        <dbReference type="PROSITE-ProRule" id="PRU00114"/>
    </source>
</evidence>
<evidence type="ECO:0000269" key="3">
    <source>
    </source>
</evidence>
<evidence type="ECO:0000269" key="4">
    <source>
    </source>
</evidence>
<evidence type="ECO:0000269" key="5">
    <source>
    </source>
</evidence>
<evidence type="ECO:0000269" key="6">
    <source>
    </source>
</evidence>
<evidence type="ECO:0000269" key="7">
    <source>
    </source>
</evidence>
<evidence type="ECO:0000269" key="8">
    <source>
    </source>
</evidence>
<evidence type="ECO:0000269" key="9">
    <source>
    </source>
</evidence>
<evidence type="ECO:0000269" key="10">
    <source>
    </source>
</evidence>
<evidence type="ECO:0000269" key="11">
    <source>
    </source>
</evidence>
<evidence type="ECO:0000269" key="12">
    <source>
    </source>
</evidence>
<evidence type="ECO:0000269" key="13">
    <source ref="1"/>
</evidence>
<evidence type="ECO:0000303" key="14">
    <source>
    </source>
</evidence>
<evidence type="ECO:0000303" key="15">
    <source>
    </source>
</evidence>
<evidence type="ECO:0000303" key="16">
    <source>
    </source>
</evidence>
<evidence type="ECO:0000303" key="17">
    <source>
    </source>
</evidence>
<evidence type="ECO:0000303" key="18">
    <source ref="1"/>
</evidence>
<evidence type="ECO:0000303" key="19">
    <source ref="5"/>
</evidence>
<evidence type="ECO:0000305" key="20"/>
<evidence type="ECO:0007829" key="21">
    <source>
        <dbReference type="PDB" id="2FCB"/>
    </source>
</evidence>
<evidence type="ECO:0007829" key="22">
    <source>
        <dbReference type="PDB" id="5OCC"/>
    </source>
</evidence>
<comment type="function">
    <text>Receptor for the Fc region of complexed or aggregated immunoglobulins gamma. Low affinity receptor. Involved in a variety of effector and regulatory functions such as phagocytosis of immune complexes and modulation of antibody production by B-cells. Binding to this receptor results in down-modulation of previous state of cell activation triggered via antigen receptors on B-cells (BCR), T-cells (TCR) or via another Fc receptor. Isoform IIB1 fails to mediate endocytosis or phagocytosis. Isoform IIB2 does not trigger phagocytosis.</text>
</comment>
<comment type="subunit">
    <text evidence="9 12">Interacts with INPP5D/SHIP1. Interacts with FGR. Interacts with LYN.</text>
</comment>
<comment type="subunit">
    <text evidence="5">(Microbial infection) Isoform IIB1 interacts with measles virus protein N. Protein N is released in the blood following lysis of measles infected cells. This interaction presumably block inflammatory immune response.</text>
</comment>
<comment type="interaction">
    <interactant intactId="EBI-724784">
        <id>P31994</id>
    </interactant>
    <interactant intactId="EBI-356114">
        <id>P01857</id>
        <label>IGHG1</label>
    </interactant>
    <organismsDiffer>false</organismsDiffer>
    <experiments>31</experiments>
</comment>
<comment type="interaction">
    <interactant intactId="EBI-724784">
        <id>P31994</id>
    </interactant>
    <interactant intactId="EBI-1380477">
        <id>Q92835</id>
        <label>INPP5D</label>
    </interactant>
    <organismsDiffer>false</organismsDiffer>
    <experiments>3</experiments>
</comment>
<comment type="interaction">
    <interactant intactId="EBI-724784">
        <id>P31994</id>
    </interactant>
    <interactant intactId="EBI-2432309">
        <id>Q92876</id>
        <label>KLK6</label>
    </interactant>
    <organismsDiffer>false</organismsDiffer>
    <experiments>3</experiments>
</comment>
<comment type="interaction">
    <interactant intactId="EBI-724784">
        <id>P31994</id>
    </interactant>
    <interactant intactId="EBI-389883">
        <id>P16333</id>
        <label>NCK1</label>
    </interactant>
    <organismsDiffer>false</organismsDiffer>
    <experiments>2</experiments>
</comment>
<comment type="interaction">
    <interactant intactId="EBI-724784">
        <id>P31994</id>
    </interactant>
    <interactant intactId="EBI-79387">
        <id>P19174</id>
        <label>PLCG1</label>
    </interactant>
    <organismsDiffer>false</organismsDiffer>
    <experiments>2</experiments>
</comment>
<comment type="interaction">
    <interactant intactId="EBI-724784">
        <id>P31994</id>
    </interactant>
    <interactant intactId="EBI-78260">
        <id>P29350</id>
        <label>PTPN6</label>
    </interactant>
    <organismsDiffer>false</organismsDiffer>
    <experiments>3</experiments>
</comment>
<comment type="subcellular location">
    <subcellularLocation>
        <location>Cell membrane</location>
        <topology>Single-pass type I membrane protein</topology>
    </subcellularLocation>
</comment>
<comment type="alternative products">
    <event type="alternative splicing"/>
    <isoform>
        <id>P31994-1</id>
        <name evidence="16">IIB1</name>
        <sequence type="displayed"/>
    </isoform>
    <isoform>
        <id>P31994-2</id>
        <name evidence="16">IIB2</name>
        <sequence type="described" ref="VSP_002643"/>
    </isoform>
    <isoform>
        <id>P31994-3</id>
        <name evidence="16">IIB3</name>
        <sequence type="described" ref="VSP_002642"/>
    </isoform>
    <isoform>
        <id>P31994-4</id>
        <name>4</name>
        <sequence type="described" ref="VSP_058635"/>
    </isoform>
    <isoform>
        <id>P31994-5</id>
        <name>5</name>
        <sequence type="described" ref="VSP_058635 VSP_002643"/>
    </isoform>
</comment>
<comment type="tissue specificity">
    <text>Is the most broadly distributed Fc-gamma-receptor. Expressed in monocyte, neutrophils, macrophages, basophils, eosinophils, Langerhans cells, B-cells, platelets cells and placenta (endothelial cells). Not detected in natural killer cells.</text>
</comment>
<comment type="domain">
    <text>Contains 1 copy of a cytoplasmic motif that is referred to as the immunoreceptor tyrosine-based inhibitor motif (ITIM). This motif is involved in modulation of cellular responses. The phosphorylated ITIM motif can bind the SH2 domain of several SH2-containing phosphatases.</text>
</comment>
<comment type="PTM">
    <text evidence="11">Phosphorylated by the SRC-type Tyr-kinases LYN and BLK.</text>
</comment>
<comment type="polymorphism">
    <text evidence="6 7">FCGR2B polymorphisms can influence susceptibility or resistance to malaria [MIM:611162].</text>
</comment>
<comment type="disease" evidence="4 7">
    <disease id="DI-02648">
        <name>Systemic lupus erythematosus</name>
        <acronym>SLE</acronym>
        <description>A chronic, relapsing, inflammatory, and often febrile multisystemic disorder of connective tissue, characterized principally by involvement of the skin, joints, kidneys and serosal membranes. It is of unknown etiology, but is thought to represent a failure of the regulatory mechanisms of the autoimmune system. The disease is marked by a wide range of system dysfunctions, an elevated erythrocyte sedimentation rate, and the formation of LE cells in the blood or bone marrow.</description>
        <dbReference type="MIM" id="152700"/>
    </disease>
    <text>Disease susceptibility is associated with variants affecting the gene represented in this entry.</text>
</comment>
<comment type="caution">
    <text evidence="20">Has sometimes been attributed to correspond to FcR-IIC.</text>
</comment>
<comment type="sequence caution" evidence="20">
    <conflict type="erroneous initiation">
        <sequence resource="EMBL-CDS" id="CAA35645"/>
    </conflict>
    <text>Truncated N-terminus.</text>
</comment>
<comment type="online information" name="Atlas of Genetics and Cytogenetics in Oncology and Haematology">
    <link uri="https://atlasgeneticsoncology.org/gene/397/FCGR2B"/>
</comment>